<protein>
    <recommendedName>
        <fullName evidence="1">Small ribosomal subunit protein uS19</fullName>
    </recommendedName>
    <alternativeName>
        <fullName evidence="2">30S ribosomal protein S19</fullName>
    </alternativeName>
</protein>
<name>RS19_STRA1</name>
<organism>
    <name type="scientific">Streptococcus agalactiae serotype Ia (strain ATCC 27591 / A909 / CDC SS700)</name>
    <dbReference type="NCBI Taxonomy" id="205921"/>
    <lineage>
        <taxon>Bacteria</taxon>
        <taxon>Bacillati</taxon>
        <taxon>Bacillota</taxon>
        <taxon>Bacilli</taxon>
        <taxon>Lactobacillales</taxon>
        <taxon>Streptococcaceae</taxon>
        <taxon>Streptococcus</taxon>
    </lineage>
</organism>
<gene>
    <name evidence="1" type="primary">rpsS</name>
    <name type="ordered locus">SAK_0095</name>
</gene>
<sequence length="92" mass="10622">MGRSLKKGPFVDEHLMKKVEAQANDEKKKVIKTWSRRSTIFPSFIGYTIAVYDGRKHVPVYIQEDMVGHKLGEFAPTRTYKGHAADDKKTRR</sequence>
<comment type="function">
    <text evidence="1">Protein S19 forms a complex with S13 that binds strongly to the 16S ribosomal RNA.</text>
</comment>
<comment type="similarity">
    <text evidence="1">Belongs to the universal ribosomal protein uS19 family.</text>
</comment>
<evidence type="ECO:0000255" key="1">
    <source>
        <dbReference type="HAMAP-Rule" id="MF_00531"/>
    </source>
</evidence>
<evidence type="ECO:0000305" key="2"/>
<proteinExistence type="inferred from homology"/>
<keyword id="KW-0687">Ribonucleoprotein</keyword>
<keyword id="KW-0689">Ribosomal protein</keyword>
<keyword id="KW-0694">RNA-binding</keyword>
<keyword id="KW-0699">rRNA-binding</keyword>
<accession>Q3K3W5</accession>
<feature type="chain" id="PRO_0000265441" description="Small ribosomal subunit protein uS19">
    <location>
        <begin position="1"/>
        <end position="92"/>
    </location>
</feature>
<reference key="1">
    <citation type="journal article" date="2005" name="Proc. Natl. Acad. Sci. U.S.A.">
        <title>Genome analysis of multiple pathogenic isolates of Streptococcus agalactiae: implications for the microbial 'pan-genome'.</title>
        <authorList>
            <person name="Tettelin H."/>
            <person name="Masignani V."/>
            <person name="Cieslewicz M.J."/>
            <person name="Donati C."/>
            <person name="Medini D."/>
            <person name="Ward N.L."/>
            <person name="Angiuoli S.V."/>
            <person name="Crabtree J."/>
            <person name="Jones A.L."/>
            <person name="Durkin A.S."/>
            <person name="DeBoy R.T."/>
            <person name="Davidsen T.M."/>
            <person name="Mora M."/>
            <person name="Scarselli M."/>
            <person name="Margarit y Ros I."/>
            <person name="Peterson J.D."/>
            <person name="Hauser C.R."/>
            <person name="Sundaram J.P."/>
            <person name="Nelson W.C."/>
            <person name="Madupu R."/>
            <person name="Brinkac L.M."/>
            <person name="Dodson R.J."/>
            <person name="Rosovitz M.J."/>
            <person name="Sullivan S.A."/>
            <person name="Daugherty S.C."/>
            <person name="Haft D.H."/>
            <person name="Selengut J."/>
            <person name="Gwinn M.L."/>
            <person name="Zhou L."/>
            <person name="Zafar N."/>
            <person name="Khouri H."/>
            <person name="Radune D."/>
            <person name="Dimitrov G."/>
            <person name="Watkins K."/>
            <person name="O'Connor K.J."/>
            <person name="Smith S."/>
            <person name="Utterback T.R."/>
            <person name="White O."/>
            <person name="Rubens C.E."/>
            <person name="Grandi G."/>
            <person name="Madoff L.C."/>
            <person name="Kasper D.L."/>
            <person name="Telford J.L."/>
            <person name="Wessels M.R."/>
            <person name="Rappuoli R."/>
            <person name="Fraser C.M."/>
        </authorList>
    </citation>
    <scope>NUCLEOTIDE SEQUENCE [LARGE SCALE GENOMIC DNA]</scope>
    <source>
        <strain>ATCC 27591 / A909 / CDC SS700</strain>
    </source>
</reference>
<dbReference type="EMBL" id="CP000114">
    <property type="protein sequence ID" value="ABA45293.1"/>
    <property type="molecule type" value="Genomic_DNA"/>
</dbReference>
<dbReference type="RefSeq" id="WP_000533765.1">
    <property type="nucleotide sequence ID" value="NC_007432.1"/>
</dbReference>
<dbReference type="SMR" id="Q3K3W5"/>
<dbReference type="GeneID" id="98392396"/>
<dbReference type="KEGG" id="sak:SAK_0095"/>
<dbReference type="HOGENOM" id="CLU_144911_0_1_9"/>
<dbReference type="GO" id="GO:0005737">
    <property type="term" value="C:cytoplasm"/>
    <property type="evidence" value="ECO:0007669"/>
    <property type="project" value="UniProtKB-ARBA"/>
</dbReference>
<dbReference type="GO" id="GO:0015935">
    <property type="term" value="C:small ribosomal subunit"/>
    <property type="evidence" value="ECO:0007669"/>
    <property type="project" value="InterPro"/>
</dbReference>
<dbReference type="GO" id="GO:0019843">
    <property type="term" value="F:rRNA binding"/>
    <property type="evidence" value="ECO:0007669"/>
    <property type="project" value="UniProtKB-UniRule"/>
</dbReference>
<dbReference type="GO" id="GO:0003735">
    <property type="term" value="F:structural constituent of ribosome"/>
    <property type="evidence" value="ECO:0007669"/>
    <property type="project" value="InterPro"/>
</dbReference>
<dbReference type="GO" id="GO:0000028">
    <property type="term" value="P:ribosomal small subunit assembly"/>
    <property type="evidence" value="ECO:0007669"/>
    <property type="project" value="TreeGrafter"/>
</dbReference>
<dbReference type="GO" id="GO:0006412">
    <property type="term" value="P:translation"/>
    <property type="evidence" value="ECO:0007669"/>
    <property type="project" value="UniProtKB-UniRule"/>
</dbReference>
<dbReference type="FunFam" id="3.30.860.10:FF:000001">
    <property type="entry name" value="30S ribosomal protein S19"/>
    <property type="match status" value="1"/>
</dbReference>
<dbReference type="Gene3D" id="3.30.860.10">
    <property type="entry name" value="30s Ribosomal Protein S19, Chain A"/>
    <property type="match status" value="1"/>
</dbReference>
<dbReference type="HAMAP" id="MF_00531">
    <property type="entry name" value="Ribosomal_uS19"/>
    <property type="match status" value="1"/>
</dbReference>
<dbReference type="InterPro" id="IPR002222">
    <property type="entry name" value="Ribosomal_uS19"/>
</dbReference>
<dbReference type="InterPro" id="IPR005732">
    <property type="entry name" value="Ribosomal_uS19_bac-type"/>
</dbReference>
<dbReference type="InterPro" id="IPR020934">
    <property type="entry name" value="Ribosomal_uS19_CS"/>
</dbReference>
<dbReference type="InterPro" id="IPR023575">
    <property type="entry name" value="Ribosomal_uS19_SF"/>
</dbReference>
<dbReference type="NCBIfam" id="TIGR01050">
    <property type="entry name" value="rpsS_bact"/>
    <property type="match status" value="1"/>
</dbReference>
<dbReference type="PANTHER" id="PTHR11880">
    <property type="entry name" value="RIBOSOMAL PROTEIN S19P FAMILY MEMBER"/>
    <property type="match status" value="1"/>
</dbReference>
<dbReference type="PANTHER" id="PTHR11880:SF8">
    <property type="entry name" value="SMALL RIBOSOMAL SUBUNIT PROTEIN US19M"/>
    <property type="match status" value="1"/>
</dbReference>
<dbReference type="Pfam" id="PF00203">
    <property type="entry name" value="Ribosomal_S19"/>
    <property type="match status" value="1"/>
</dbReference>
<dbReference type="PIRSF" id="PIRSF002144">
    <property type="entry name" value="Ribosomal_S19"/>
    <property type="match status" value="1"/>
</dbReference>
<dbReference type="PRINTS" id="PR00975">
    <property type="entry name" value="RIBOSOMALS19"/>
</dbReference>
<dbReference type="SUPFAM" id="SSF54570">
    <property type="entry name" value="Ribosomal protein S19"/>
    <property type="match status" value="1"/>
</dbReference>
<dbReference type="PROSITE" id="PS00323">
    <property type="entry name" value="RIBOSOMAL_S19"/>
    <property type="match status" value="1"/>
</dbReference>